<gene>
    <name type="primary">RAN1</name>
    <name type="synonym">TC4</name>
    <name type="ordered locus">Os01g0611100</name>
    <name type="ordered locus">LOC_Os01g42530</name>
    <name type="ORF">OsJ_002485</name>
    <name type="ORF">P0046B10.3</name>
    <name type="ORF">P0410E03.34</name>
</gene>
<comment type="function">
    <text evidence="1">GTP-binding protein involved in nucleocytoplasmic transport. Required for the import of protein into the nucleus and also for RNA export. Involved in chromatin condensation and control of cell cycle (By similarity).</text>
</comment>
<comment type="subunit">
    <text evidence="2">Found in a nuclear export complex with RanGTP, exportin and pre-miRNA (By similarity).</text>
</comment>
<comment type="subcellular location">
    <subcellularLocation>
        <location evidence="1">Nucleus</location>
    </subcellularLocation>
</comment>
<comment type="similarity">
    <text evidence="3 4">Belongs to the small GTPase superfamily. Ran family.</text>
</comment>
<comment type="sequence caution" evidence="4">
    <conflict type="erroneous gene model prediction">
        <sequence resource="EMBL-CDS" id="EAZ12660"/>
    </conflict>
</comment>
<proteinExistence type="evidence at transcript level"/>
<protein>
    <recommendedName>
        <fullName>GTP-binding nuclear protein Ran-1</fullName>
        <shortName>OsRan1</shortName>
    </recommendedName>
    <alternativeName>
        <fullName>Ras-related nuclear protein 1</fullName>
    </alternativeName>
</protein>
<accession>Q7F7I7</accession>
<accession>A2ZVB3</accession>
<accession>B7EL71</accession>
<accession>Q9XJ44</accession>
<reference key="1">
    <citation type="submission" date="1998-06" db="EMBL/GenBank/DDBJ databases">
        <title>Functional characterization of rice Ran homologues.</title>
        <authorList>
            <person name="Jiang C."/>
            <person name="Matsuki R."/>
            <person name="Yamamoto N."/>
        </authorList>
    </citation>
    <scope>NUCLEOTIDE SEQUENCE [MRNA]</scope>
    <source>
        <strain>cv. Nipponbare</strain>
    </source>
</reference>
<reference key="2">
    <citation type="submission" date="1998-07" db="EMBL/GenBank/DDBJ databases">
        <title>Molecular Analysis of rice Ran-related genes.</title>
        <authorList>
            <person name="Kawagishi-Kobayashi M."/>
        </authorList>
    </citation>
    <scope>NUCLEOTIDE SEQUENCE [MRNA]</scope>
    <source>
        <strain>cv. Nipponbare</strain>
        <tissue>Seedling</tissue>
    </source>
</reference>
<reference key="3">
    <citation type="journal article" date="2002" name="Nature">
        <title>The genome sequence and structure of rice chromosome 1.</title>
        <authorList>
            <person name="Sasaki T."/>
            <person name="Matsumoto T."/>
            <person name="Yamamoto K."/>
            <person name="Sakata K."/>
            <person name="Baba T."/>
            <person name="Katayose Y."/>
            <person name="Wu J."/>
            <person name="Niimura Y."/>
            <person name="Cheng Z."/>
            <person name="Nagamura Y."/>
            <person name="Antonio B.A."/>
            <person name="Kanamori H."/>
            <person name="Hosokawa S."/>
            <person name="Masukawa M."/>
            <person name="Arikawa K."/>
            <person name="Chiden Y."/>
            <person name="Hayashi M."/>
            <person name="Okamoto M."/>
            <person name="Ando T."/>
            <person name="Aoki H."/>
            <person name="Arita K."/>
            <person name="Hamada M."/>
            <person name="Harada C."/>
            <person name="Hijishita S."/>
            <person name="Honda M."/>
            <person name="Ichikawa Y."/>
            <person name="Idonuma A."/>
            <person name="Iijima M."/>
            <person name="Ikeda M."/>
            <person name="Ikeno M."/>
            <person name="Ito S."/>
            <person name="Ito T."/>
            <person name="Ito Y."/>
            <person name="Ito Y."/>
            <person name="Iwabuchi A."/>
            <person name="Kamiya K."/>
            <person name="Karasawa W."/>
            <person name="Katagiri S."/>
            <person name="Kikuta A."/>
            <person name="Kobayashi N."/>
            <person name="Kono I."/>
            <person name="Machita K."/>
            <person name="Maehara T."/>
            <person name="Mizuno H."/>
            <person name="Mizubayashi T."/>
            <person name="Mukai Y."/>
            <person name="Nagasaki H."/>
            <person name="Nakashima M."/>
            <person name="Nakama Y."/>
            <person name="Nakamichi Y."/>
            <person name="Nakamura M."/>
            <person name="Namiki N."/>
            <person name="Negishi M."/>
            <person name="Ohta I."/>
            <person name="Ono N."/>
            <person name="Saji S."/>
            <person name="Sakai K."/>
            <person name="Shibata M."/>
            <person name="Shimokawa T."/>
            <person name="Shomura A."/>
            <person name="Song J."/>
            <person name="Takazaki Y."/>
            <person name="Terasawa K."/>
            <person name="Tsuji K."/>
            <person name="Waki K."/>
            <person name="Yamagata H."/>
            <person name="Yamane H."/>
            <person name="Yoshiki S."/>
            <person name="Yoshihara R."/>
            <person name="Yukawa K."/>
            <person name="Zhong H."/>
            <person name="Iwama H."/>
            <person name="Endo T."/>
            <person name="Ito H."/>
            <person name="Hahn J.H."/>
            <person name="Kim H.-I."/>
            <person name="Eun M.-Y."/>
            <person name="Yano M."/>
            <person name="Jiang J."/>
            <person name="Gojobori T."/>
        </authorList>
    </citation>
    <scope>NUCLEOTIDE SEQUENCE [LARGE SCALE GENOMIC DNA]</scope>
    <source>
        <strain>cv. Nipponbare</strain>
    </source>
</reference>
<reference key="4">
    <citation type="journal article" date="2005" name="Nature">
        <title>The map-based sequence of the rice genome.</title>
        <authorList>
            <consortium name="International rice genome sequencing project (IRGSP)"/>
        </authorList>
    </citation>
    <scope>NUCLEOTIDE SEQUENCE [LARGE SCALE GENOMIC DNA]</scope>
    <source>
        <strain>cv. Nipponbare</strain>
    </source>
</reference>
<reference key="5">
    <citation type="journal article" date="2008" name="Nucleic Acids Res.">
        <title>The rice annotation project database (RAP-DB): 2008 update.</title>
        <authorList>
            <consortium name="The rice annotation project (RAP)"/>
        </authorList>
    </citation>
    <scope>GENOME REANNOTATION</scope>
    <source>
        <strain>cv. Nipponbare</strain>
    </source>
</reference>
<reference key="6">
    <citation type="journal article" date="2013" name="Rice">
        <title>Improvement of the Oryza sativa Nipponbare reference genome using next generation sequence and optical map data.</title>
        <authorList>
            <person name="Kawahara Y."/>
            <person name="de la Bastide M."/>
            <person name="Hamilton J.P."/>
            <person name="Kanamori H."/>
            <person name="McCombie W.R."/>
            <person name="Ouyang S."/>
            <person name="Schwartz D.C."/>
            <person name="Tanaka T."/>
            <person name="Wu J."/>
            <person name="Zhou S."/>
            <person name="Childs K.L."/>
            <person name="Davidson R.M."/>
            <person name="Lin H."/>
            <person name="Quesada-Ocampo L."/>
            <person name="Vaillancourt B."/>
            <person name="Sakai H."/>
            <person name="Lee S.S."/>
            <person name="Kim J."/>
            <person name="Numa H."/>
            <person name="Itoh T."/>
            <person name="Buell C.R."/>
            <person name="Matsumoto T."/>
        </authorList>
    </citation>
    <scope>GENOME REANNOTATION</scope>
    <source>
        <strain>cv. Nipponbare</strain>
    </source>
</reference>
<reference key="7">
    <citation type="journal article" date="2005" name="PLoS Biol.">
        <title>The genomes of Oryza sativa: a history of duplications.</title>
        <authorList>
            <person name="Yu J."/>
            <person name="Wang J."/>
            <person name="Lin W."/>
            <person name="Li S."/>
            <person name="Li H."/>
            <person name="Zhou J."/>
            <person name="Ni P."/>
            <person name="Dong W."/>
            <person name="Hu S."/>
            <person name="Zeng C."/>
            <person name="Zhang J."/>
            <person name="Zhang Y."/>
            <person name="Li R."/>
            <person name="Xu Z."/>
            <person name="Li S."/>
            <person name="Li X."/>
            <person name="Zheng H."/>
            <person name="Cong L."/>
            <person name="Lin L."/>
            <person name="Yin J."/>
            <person name="Geng J."/>
            <person name="Li G."/>
            <person name="Shi J."/>
            <person name="Liu J."/>
            <person name="Lv H."/>
            <person name="Li J."/>
            <person name="Wang J."/>
            <person name="Deng Y."/>
            <person name="Ran L."/>
            <person name="Shi X."/>
            <person name="Wang X."/>
            <person name="Wu Q."/>
            <person name="Li C."/>
            <person name="Ren X."/>
            <person name="Wang J."/>
            <person name="Wang X."/>
            <person name="Li D."/>
            <person name="Liu D."/>
            <person name="Zhang X."/>
            <person name="Ji Z."/>
            <person name="Zhao W."/>
            <person name="Sun Y."/>
            <person name="Zhang Z."/>
            <person name="Bao J."/>
            <person name="Han Y."/>
            <person name="Dong L."/>
            <person name="Ji J."/>
            <person name="Chen P."/>
            <person name="Wu S."/>
            <person name="Liu J."/>
            <person name="Xiao Y."/>
            <person name="Bu D."/>
            <person name="Tan J."/>
            <person name="Yang L."/>
            <person name="Ye C."/>
            <person name="Zhang J."/>
            <person name="Xu J."/>
            <person name="Zhou Y."/>
            <person name="Yu Y."/>
            <person name="Zhang B."/>
            <person name="Zhuang S."/>
            <person name="Wei H."/>
            <person name="Liu B."/>
            <person name="Lei M."/>
            <person name="Yu H."/>
            <person name="Li Y."/>
            <person name="Xu H."/>
            <person name="Wei S."/>
            <person name="He X."/>
            <person name="Fang L."/>
            <person name="Zhang Z."/>
            <person name="Zhang Y."/>
            <person name="Huang X."/>
            <person name="Su Z."/>
            <person name="Tong W."/>
            <person name="Li J."/>
            <person name="Tong Z."/>
            <person name="Li S."/>
            <person name="Ye J."/>
            <person name="Wang L."/>
            <person name="Fang L."/>
            <person name="Lei T."/>
            <person name="Chen C.-S."/>
            <person name="Chen H.-C."/>
            <person name="Xu Z."/>
            <person name="Li H."/>
            <person name="Huang H."/>
            <person name="Zhang F."/>
            <person name="Xu H."/>
            <person name="Li N."/>
            <person name="Zhao C."/>
            <person name="Li S."/>
            <person name="Dong L."/>
            <person name="Huang Y."/>
            <person name="Li L."/>
            <person name="Xi Y."/>
            <person name="Qi Q."/>
            <person name="Li W."/>
            <person name="Zhang B."/>
            <person name="Hu W."/>
            <person name="Zhang Y."/>
            <person name="Tian X."/>
            <person name="Jiao Y."/>
            <person name="Liang X."/>
            <person name="Jin J."/>
            <person name="Gao L."/>
            <person name="Zheng W."/>
            <person name="Hao B."/>
            <person name="Liu S.-M."/>
            <person name="Wang W."/>
            <person name="Yuan L."/>
            <person name="Cao M."/>
            <person name="McDermott J."/>
            <person name="Samudrala R."/>
            <person name="Wang J."/>
            <person name="Wong G.K.-S."/>
            <person name="Yang H."/>
        </authorList>
    </citation>
    <scope>NUCLEOTIDE SEQUENCE [LARGE SCALE GENOMIC DNA]</scope>
    <source>
        <strain>cv. Nipponbare</strain>
    </source>
</reference>
<reference key="8">
    <citation type="journal article" date="2003" name="Science">
        <title>Collection, mapping, and annotation of over 28,000 cDNA clones from japonica rice.</title>
        <authorList>
            <consortium name="The rice full-length cDNA consortium"/>
        </authorList>
    </citation>
    <scope>NUCLEOTIDE SEQUENCE [LARGE SCALE MRNA]</scope>
    <source>
        <strain>cv. Nipponbare</strain>
    </source>
</reference>
<organism>
    <name type="scientific">Oryza sativa subsp. japonica</name>
    <name type="common">Rice</name>
    <dbReference type="NCBI Taxonomy" id="39947"/>
    <lineage>
        <taxon>Eukaryota</taxon>
        <taxon>Viridiplantae</taxon>
        <taxon>Streptophyta</taxon>
        <taxon>Embryophyta</taxon>
        <taxon>Tracheophyta</taxon>
        <taxon>Spermatophyta</taxon>
        <taxon>Magnoliopsida</taxon>
        <taxon>Liliopsida</taxon>
        <taxon>Poales</taxon>
        <taxon>Poaceae</taxon>
        <taxon>BOP clade</taxon>
        <taxon>Oryzoideae</taxon>
        <taxon>Oryzeae</taxon>
        <taxon>Oryzinae</taxon>
        <taxon>Oryza</taxon>
        <taxon>Oryza sativa</taxon>
    </lineage>
</organism>
<sequence>MALPNQQTVDYPSFKLVIVGDGGTGKTTFVKRHLTGEFEKKYEPTIGVEVHPLDFFTNCGKIRFYCWDTAGQEKFGGLRDGYYIHGQCAIIMFDVTSRLTYKNVPTWHRDLCRVCENIPIVLCGNKVDVKNRQVKAKQVTFHRKKNLQYYEVSAKSNYNFEKPFLYLARKLAGDGNLHFVETPALAPPDVTIDLAAQQQHEAELAAAAAQPLPDDDDDLIE</sequence>
<dbReference type="EMBL" id="AB015288">
    <property type="protein sequence ID" value="BAA34943.1"/>
    <property type="molecule type" value="mRNA"/>
</dbReference>
<dbReference type="EMBL" id="AB015971">
    <property type="protein sequence ID" value="BAB82437.1"/>
    <property type="molecule type" value="mRNA"/>
</dbReference>
<dbReference type="EMBL" id="AP002844">
    <property type="protein sequence ID" value="BAB21295.1"/>
    <property type="molecule type" value="Genomic_DNA"/>
</dbReference>
<dbReference type="EMBL" id="AP003314">
    <property type="protein sequence ID" value="BAB93265.1"/>
    <property type="molecule type" value="Genomic_DNA"/>
</dbReference>
<dbReference type="EMBL" id="AP008207">
    <property type="protein sequence ID" value="BAF05464.1"/>
    <property type="molecule type" value="Genomic_DNA"/>
</dbReference>
<dbReference type="EMBL" id="AP014957">
    <property type="protein sequence ID" value="BAS73119.1"/>
    <property type="molecule type" value="Genomic_DNA"/>
</dbReference>
<dbReference type="EMBL" id="CM000138">
    <property type="protein sequence ID" value="EAZ12660.1"/>
    <property type="status" value="ALT_SEQ"/>
    <property type="molecule type" value="Genomic_DNA"/>
</dbReference>
<dbReference type="EMBL" id="AK072731">
    <property type="protein sequence ID" value="BAG93118.1"/>
    <property type="molecule type" value="mRNA"/>
</dbReference>
<dbReference type="RefSeq" id="XP_015622838.1">
    <property type="nucleotide sequence ID" value="XM_015767352.1"/>
</dbReference>
<dbReference type="SMR" id="Q7F7I7"/>
<dbReference type="FunCoup" id="Q7F7I7">
    <property type="interactions" value="2976"/>
</dbReference>
<dbReference type="STRING" id="39947.Q7F7I7"/>
<dbReference type="PaxDb" id="39947-Q7F7I7"/>
<dbReference type="EnsemblPlants" id="Os01t0611100-01">
    <property type="protein sequence ID" value="Os01t0611100-01"/>
    <property type="gene ID" value="Os01g0611100"/>
</dbReference>
<dbReference type="Gramene" id="Os01t0611100-01">
    <property type="protein sequence ID" value="Os01t0611100-01"/>
    <property type="gene ID" value="Os01g0611100"/>
</dbReference>
<dbReference type="KEGG" id="dosa:Os01g0611100"/>
<dbReference type="eggNOG" id="KOG0096">
    <property type="taxonomic scope" value="Eukaryota"/>
</dbReference>
<dbReference type="HOGENOM" id="CLU_041217_13_0_1"/>
<dbReference type="InParanoid" id="Q7F7I7"/>
<dbReference type="OMA" id="NACGVEN"/>
<dbReference type="OrthoDB" id="2012850at2759"/>
<dbReference type="Proteomes" id="UP000000763">
    <property type="component" value="Chromosome 1"/>
</dbReference>
<dbReference type="Proteomes" id="UP000007752">
    <property type="component" value="Chromosome 1"/>
</dbReference>
<dbReference type="Proteomes" id="UP000059680">
    <property type="component" value="Chromosome 1"/>
</dbReference>
<dbReference type="GO" id="GO:0005737">
    <property type="term" value="C:cytoplasm"/>
    <property type="evidence" value="ECO:0000318"/>
    <property type="project" value="GO_Central"/>
</dbReference>
<dbReference type="GO" id="GO:0005634">
    <property type="term" value="C:nucleus"/>
    <property type="evidence" value="ECO:0000318"/>
    <property type="project" value="GO_Central"/>
</dbReference>
<dbReference type="GO" id="GO:0005525">
    <property type="term" value="F:GTP binding"/>
    <property type="evidence" value="ECO:0007669"/>
    <property type="project" value="UniProtKB-KW"/>
</dbReference>
<dbReference type="GO" id="GO:0003924">
    <property type="term" value="F:GTPase activity"/>
    <property type="evidence" value="ECO:0000318"/>
    <property type="project" value="GO_Central"/>
</dbReference>
<dbReference type="GO" id="GO:0006606">
    <property type="term" value="P:protein import into nucleus"/>
    <property type="evidence" value="ECO:0000318"/>
    <property type="project" value="GO_Central"/>
</dbReference>
<dbReference type="GO" id="GO:0000054">
    <property type="term" value="P:ribosomal subunit export from nucleus"/>
    <property type="evidence" value="ECO:0000318"/>
    <property type="project" value="GO_Central"/>
</dbReference>
<dbReference type="CDD" id="cd00877">
    <property type="entry name" value="Ran"/>
    <property type="match status" value="1"/>
</dbReference>
<dbReference type="FunFam" id="3.40.50.300:FF:000369">
    <property type="entry name" value="GTP-binding nuclear protein"/>
    <property type="match status" value="1"/>
</dbReference>
<dbReference type="Gene3D" id="3.40.50.300">
    <property type="entry name" value="P-loop containing nucleotide triphosphate hydrolases"/>
    <property type="match status" value="1"/>
</dbReference>
<dbReference type="InterPro" id="IPR027417">
    <property type="entry name" value="P-loop_NTPase"/>
</dbReference>
<dbReference type="InterPro" id="IPR002041">
    <property type="entry name" value="Ran_GTPase"/>
</dbReference>
<dbReference type="InterPro" id="IPR005225">
    <property type="entry name" value="Small_GTP-bd"/>
</dbReference>
<dbReference type="InterPro" id="IPR001806">
    <property type="entry name" value="Small_GTPase"/>
</dbReference>
<dbReference type="NCBIfam" id="TIGR00231">
    <property type="entry name" value="small_GTP"/>
    <property type="match status" value="1"/>
</dbReference>
<dbReference type="PANTHER" id="PTHR24071:SF33">
    <property type="entry name" value="GTP-BINDING NUCLEAR PROTEIN RAN-1"/>
    <property type="match status" value="1"/>
</dbReference>
<dbReference type="PANTHER" id="PTHR24071">
    <property type="entry name" value="RAN GTPASE"/>
    <property type="match status" value="1"/>
</dbReference>
<dbReference type="Pfam" id="PF00071">
    <property type="entry name" value="Ras"/>
    <property type="match status" value="1"/>
</dbReference>
<dbReference type="PRINTS" id="PR00627">
    <property type="entry name" value="GTPRANTC4"/>
</dbReference>
<dbReference type="SMART" id="SM00175">
    <property type="entry name" value="RAB"/>
    <property type="match status" value="1"/>
</dbReference>
<dbReference type="SMART" id="SM00176">
    <property type="entry name" value="RAN"/>
    <property type="match status" value="1"/>
</dbReference>
<dbReference type="SMART" id="SM00173">
    <property type="entry name" value="RAS"/>
    <property type="match status" value="1"/>
</dbReference>
<dbReference type="SMART" id="SM00174">
    <property type="entry name" value="RHO"/>
    <property type="match status" value="1"/>
</dbReference>
<dbReference type="SUPFAM" id="SSF52540">
    <property type="entry name" value="P-loop containing nucleoside triphosphate hydrolases"/>
    <property type="match status" value="1"/>
</dbReference>
<dbReference type="PROSITE" id="PS51418">
    <property type="entry name" value="RAN"/>
    <property type="match status" value="1"/>
</dbReference>
<feature type="chain" id="PRO_0000347208" description="GTP-binding nuclear protein Ran-1">
    <location>
        <begin position="1"/>
        <end position="221"/>
    </location>
</feature>
<feature type="domain" description="Small GTPase Ran-type" evidence="3">
    <location>
        <begin position="10"/>
        <end position="174"/>
    </location>
</feature>
<feature type="region of interest" description="Switch-I" evidence="3">
    <location>
        <begin position="40"/>
        <end position="48"/>
    </location>
</feature>
<feature type="region of interest" description="Switch-II" evidence="3">
    <location>
        <begin position="71"/>
        <end position="87"/>
    </location>
</feature>
<feature type="binding site" evidence="2">
    <location>
        <begin position="21"/>
        <end position="28"/>
    </location>
    <ligand>
        <name>GTP</name>
        <dbReference type="ChEBI" id="CHEBI:37565"/>
    </ligand>
</feature>
<feature type="binding site" evidence="2">
    <location>
        <position position="71"/>
    </location>
    <ligand>
        <name>GTP</name>
        <dbReference type="ChEBI" id="CHEBI:37565"/>
    </ligand>
</feature>
<feature type="binding site" evidence="2">
    <location>
        <begin position="125"/>
        <end position="128"/>
    </location>
    <ligand>
        <name>GTP</name>
        <dbReference type="ChEBI" id="CHEBI:37565"/>
    </ligand>
</feature>
<feature type="binding site" evidence="2">
    <location>
        <begin position="153"/>
        <end position="155"/>
    </location>
    <ligand>
        <name>GTP</name>
        <dbReference type="ChEBI" id="CHEBI:37565"/>
    </ligand>
</feature>
<evidence type="ECO:0000250" key="1"/>
<evidence type="ECO:0000250" key="2">
    <source>
        <dbReference type="UniProtKB" id="P62825"/>
    </source>
</evidence>
<evidence type="ECO:0000255" key="3">
    <source>
        <dbReference type="PROSITE-ProRule" id="PRU00752"/>
    </source>
</evidence>
<evidence type="ECO:0000305" key="4"/>
<name>RAN1_ORYSJ</name>
<keyword id="KW-0342">GTP-binding</keyword>
<keyword id="KW-0547">Nucleotide-binding</keyword>
<keyword id="KW-0539">Nucleus</keyword>
<keyword id="KW-0653">Protein transport</keyword>
<keyword id="KW-1185">Reference proteome</keyword>
<keyword id="KW-0813">Transport</keyword>